<comment type="function">
    <text evidence="1">Required for nucleoid occlusion (NO) phenomenon, which prevents Z-ring formation and cell division over the nucleoid. Acts as a DNA-associated cell division inhibitor that binds simultaneously chromosomal DNA and FtsZ, and disrupts the assembly of FtsZ polymers. SlmA-DNA-binding sequences (SBS) are dispersed on non-Ter regions of the chromosome, preventing FtsZ polymerization at these regions.</text>
</comment>
<comment type="subunit">
    <text evidence="1">Homodimer. Interacts with FtsZ.</text>
</comment>
<comment type="subcellular location">
    <subcellularLocation>
        <location evidence="1">Cytoplasm</location>
        <location evidence="1">Nucleoid</location>
    </subcellularLocation>
</comment>
<comment type="similarity">
    <text evidence="1">Belongs to the nucleoid occlusion factor SlmA family.</text>
</comment>
<organism>
    <name type="scientific">Escherichia coli (strain SE11)</name>
    <dbReference type="NCBI Taxonomy" id="409438"/>
    <lineage>
        <taxon>Bacteria</taxon>
        <taxon>Pseudomonadati</taxon>
        <taxon>Pseudomonadota</taxon>
        <taxon>Gammaproteobacteria</taxon>
        <taxon>Enterobacterales</taxon>
        <taxon>Enterobacteriaceae</taxon>
        <taxon>Escherichia</taxon>
    </lineage>
</organism>
<name>SLMA_ECOSE</name>
<gene>
    <name evidence="1" type="primary">slmA</name>
    <name type="ordered locus">ECSE_3921</name>
</gene>
<keyword id="KW-0131">Cell cycle</keyword>
<keyword id="KW-0132">Cell division</keyword>
<keyword id="KW-0175">Coiled coil</keyword>
<keyword id="KW-0963">Cytoplasm</keyword>
<keyword id="KW-0238">DNA-binding</keyword>
<sequence>MAEKQTAKRNRREEILQSLALMLESSDGSQRITTAKLAASVGVSEAALYRHFPSKTRMFDSLIEFIEDSLITRINLILKDEKDTTARLRLIVLLLLGFGERNPGLTRILTGHALMFEQDRLQGRINQLFERIEAQLRQVLREKRMREGEGYTTDETLLASQILAFCEGMLSRFVRSEFKYRPTDDFDARWPLIAAQLQ</sequence>
<evidence type="ECO:0000255" key="1">
    <source>
        <dbReference type="HAMAP-Rule" id="MF_01839"/>
    </source>
</evidence>
<protein>
    <recommendedName>
        <fullName evidence="1">Nucleoid occlusion factor SlmA</fullName>
    </recommendedName>
</protein>
<dbReference type="EMBL" id="AP009240">
    <property type="protein sequence ID" value="BAG79445.1"/>
    <property type="molecule type" value="Genomic_DNA"/>
</dbReference>
<dbReference type="RefSeq" id="WP_000818601.1">
    <property type="nucleotide sequence ID" value="NC_011415.1"/>
</dbReference>
<dbReference type="SMR" id="B6I3L8"/>
<dbReference type="GeneID" id="93778356"/>
<dbReference type="KEGG" id="ecy:ECSE_3921"/>
<dbReference type="HOGENOM" id="CLU_069356_5_0_6"/>
<dbReference type="Proteomes" id="UP000008199">
    <property type="component" value="Chromosome"/>
</dbReference>
<dbReference type="GO" id="GO:0043590">
    <property type="term" value="C:bacterial nucleoid"/>
    <property type="evidence" value="ECO:0007669"/>
    <property type="project" value="UniProtKB-UniRule"/>
</dbReference>
<dbReference type="GO" id="GO:0005737">
    <property type="term" value="C:cytoplasm"/>
    <property type="evidence" value="ECO:0007669"/>
    <property type="project" value="UniProtKB-UniRule"/>
</dbReference>
<dbReference type="GO" id="GO:0003700">
    <property type="term" value="F:DNA-binding transcription factor activity"/>
    <property type="evidence" value="ECO:0007669"/>
    <property type="project" value="TreeGrafter"/>
</dbReference>
<dbReference type="GO" id="GO:0000976">
    <property type="term" value="F:transcription cis-regulatory region binding"/>
    <property type="evidence" value="ECO:0007669"/>
    <property type="project" value="TreeGrafter"/>
</dbReference>
<dbReference type="GO" id="GO:0051301">
    <property type="term" value="P:cell division"/>
    <property type="evidence" value="ECO:0007669"/>
    <property type="project" value="UniProtKB-KW"/>
</dbReference>
<dbReference type="GO" id="GO:0010974">
    <property type="term" value="P:negative regulation of division septum assembly"/>
    <property type="evidence" value="ECO:0007669"/>
    <property type="project" value="InterPro"/>
</dbReference>
<dbReference type="FunFam" id="1.10.357.10:FF:000002">
    <property type="entry name" value="Nucleoid occlusion factor SlmA"/>
    <property type="match status" value="1"/>
</dbReference>
<dbReference type="Gene3D" id="1.10.357.10">
    <property type="entry name" value="Tetracycline Repressor, domain 2"/>
    <property type="match status" value="1"/>
</dbReference>
<dbReference type="HAMAP" id="MF_01839">
    <property type="entry name" value="NO_factor_SlmA"/>
    <property type="match status" value="1"/>
</dbReference>
<dbReference type="InterPro" id="IPR023772">
    <property type="entry name" value="DNA-bd_HTH_TetR-type_CS"/>
</dbReference>
<dbReference type="InterPro" id="IPR009057">
    <property type="entry name" value="Homeodomain-like_sf"/>
</dbReference>
<dbReference type="InterPro" id="IPR050109">
    <property type="entry name" value="HTH-type_TetR-like_transc_reg"/>
</dbReference>
<dbReference type="InterPro" id="IPR001647">
    <property type="entry name" value="HTH_TetR"/>
</dbReference>
<dbReference type="InterPro" id="IPR023769">
    <property type="entry name" value="NO_SlmA"/>
</dbReference>
<dbReference type="InterPro" id="IPR054580">
    <property type="entry name" value="SlmA-like_C"/>
</dbReference>
<dbReference type="InterPro" id="IPR036271">
    <property type="entry name" value="Tet_transcr_reg_TetR-rel_C_sf"/>
</dbReference>
<dbReference type="NCBIfam" id="NF007015">
    <property type="entry name" value="PRK09480.1"/>
    <property type="match status" value="1"/>
</dbReference>
<dbReference type="PANTHER" id="PTHR30055">
    <property type="entry name" value="HTH-TYPE TRANSCRIPTIONAL REGULATOR RUTR"/>
    <property type="match status" value="1"/>
</dbReference>
<dbReference type="PANTHER" id="PTHR30055:SF183">
    <property type="entry name" value="NUCLEOID OCCLUSION FACTOR SLMA"/>
    <property type="match status" value="1"/>
</dbReference>
<dbReference type="Pfam" id="PF22276">
    <property type="entry name" value="SlmA-like_C"/>
    <property type="match status" value="1"/>
</dbReference>
<dbReference type="Pfam" id="PF00440">
    <property type="entry name" value="TetR_N"/>
    <property type="match status" value="1"/>
</dbReference>
<dbReference type="SUPFAM" id="SSF46689">
    <property type="entry name" value="Homeodomain-like"/>
    <property type="match status" value="1"/>
</dbReference>
<dbReference type="SUPFAM" id="SSF48498">
    <property type="entry name" value="Tetracyclin repressor-like, C-terminal domain"/>
    <property type="match status" value="1"/>
</dbReference>
<dbReference type="PROSITE" id="PS01081">
    <property type="entry name" value="HTH_TETR_1"/>
    <property type="match status" value="1"/>
</dbReference>
<dbReference type="PROSITE" id="PS50977">
    <property type="entry name" value="HTH_TETR_2"/>
    <property type="match status" value="1"/>
</dbReference>
<accession>B6I3L8</accession>
<proteinExistence type="inferred from homology"/>
<feature type="chain" id="PRO_1000188387" description="Nucleoid occlusion factor SlmA">
    <location>
        <begin position="1"/>
        <end position="198"/>
    </location>
</feature>
<feature type="domain" description="HTH tetR-type" evidence="1">
    <location>
        <begin position="10"/>
        <end position="70"/>
    </location>
</feature>
<feature type="DNA-binding region" description="H-T-H motif" evidence="1">
    <location>
        <begin position="33"/>
        <end position="52"/>
    </location>
</feature>
<feature type="coiled-coil region" evidence="1">
    <location>
        <begin position="117"/>
        <end position="144"/>
    </location>
</feature>
<reference key="1">
    <citation type="journal article" date="2008" name="DNA Res.">
        <title>Complete genome sequence and comparative analysis of the wild-type commensal Escherichia coli strain SE11 isolated from a healthy adult.</title>
        <authorList>
            <person name="Oshima K."/>
            <person name="Toh H."/>
            <person name="Ogura Y."/>
            <person name="Sasamoto H."/>
            <person name="Morita H."/>
            <person name="Park S.-H."/>
            <person name="Ooka T."/>
            <person name="Iyoda S."/>
            <person name="Taylor T.D."/>
            <person name="Hayashi T."/>
            <person name="Itoh K."/>
            <person name="Hattori M."/>
        </authorList>
    </citation>
    <scope>NUCLEOTIDE SEQUENCE [LARGE SCALE GENOMIC DNA]</scope>
    <source>
        <strain>SE11</strain>
    </source>
</reference>